<feature type="chain" id="PRO_0000067892" description="DNA-directed RNA polymerase subunit beta'">
    <location>
        <begin position="1"/>
        <end position="629"/>
    </location>
</feature>
<feature type="binding site" evidence="1">
    <location>
        <position position="70"/>
    </location>
    <ligand>
        <name>Zn(2+)</name>
        <dbReference type="ChEBI" id="CHEBI:29105"/>
    </ligand>
</feature>
<feature type="binding site" evidence="1">
    <location>
        <position position="72"/>
    </location>
    <ligand>
        <name>Zn(2+)</name>
        <dbReference type="ChEBI" id="CHEBI:29105"/>
    </ligand>
</feature>
<feature type="binding site" evidence="1">
    <location>
        <position position="85"/>
    </location>
    <ligand>
        <name>Zn(2+)</name>
        <dbReference type="ChEBI" id="CHEBI:29105"/>
    </ligand>
</feature>
<feature type="binding site" evidence="1">
    <location>
        <position position="88"/>
    </location>
    <ligand>
        <name>Zn(2+)</name>
        <dbReference type="ChEBI" id="CHEBI:29105"/>
    </ligand>
</feature>
<feature type="binding site" evidence="1">
    <location>
        <position position="472"/>
    </location>
    <ligand>
        <name>Mg(2+)</name>
        <dbReference type="ChEBI" id="CHEBI:18420"/>
    </ligand>
</feature>
<feature type="binding site" evidence="1">
    <location>
        <position position="474"/>
    </location>
    <ligand>
        <name>Mg(2+)</name>
        <dbReference type="ChEBI" id="CHEBI:18420"/>
    </ligand>
</feature>
<feature type="binding site" evidence="1">
    <location>
        <position position="476"/>
    </location>
    <ligand>
        <name>Mg(2+)</name>
        <dbReference type="ChEBI" id="CHEBI:18420"/>
    </ligand>
</feature>
<comment type="function">
    <text evidence="1">DNA-dependent RNA polymerase catalyzes the transcription of DNA into RNA using the four ribonucleoside triphosphates as substrates.</text>
</comment>
<comment type="catalytic activity">
    <reaction evidence="1">
        <text>RNA(n) + a ribonucleoside 5'-triphosphate = RNA(n+1) + diphosphate</text>
        <dbReference type="Rhea" id="RHEA:21248"/>
        <dbReference type="Rhea" id="RHEA-COMP:14527"/>
        <dbReference type="Rhea" id="RHEA-COMP:17342"/>
        <dbReference type="ChEBI" id="CHEBI:33019"/>
        <dbReference type="ChEBI" id="CHEBI:61557"/>
        <dbReference type="ChEBI" id="CHEBI:140395"/>
        <dbReference type="EC" id="2.7.7.6"/>
    </reaction>
</comment>
<comment type="cofactor">
    <cofactor evidence="1">
        <name>Mg(2+)</name>
        <dbReference type="ChEBI" id="CHEBI:18420"/>
    </cofactor>
    <text evidence="1">Binds 1 Mg(2+) ion per subunit.</text>
</comment>
<comment type="cofactor">
    <cofactor evidence="1">
        <name>Zn(2+)</name>
        <dbReference type="ChEBI" id="CHEBI:29105"/>
    </cofactor>
    <text evidence="1">Binds 1 Zn(2+) ion per subunit.</text>
</comment>
<comment type="subunit">
    <text evidence="1">In plastids the minimal PEP RNA polymerase catalytic core is composed of four subunits: alpha, beta, beta', and beta''. When a (nuclear-encoded) sigma factor is associated with the core the holoenzyme is formed, which can initiate transcription.</text>
</comment>
<comment type="subcellular location">
    <subcellularLocation>
        <location evidence="1">Plastid</location>
        <location evidence="1">Chloroplast</location>
    </subcellularLocation>
</comment>
<comment type="similarity">
    <text evidence="1">Belongs to the RNA polymerase beta' chain family. RpoC1 subfamily.</text>
</comment>
<protein>
    <recommendedName>
        <fullName evidence="1">DNA-directed RNA polymerase subunit beta'</fullName>
        <ecNumber evidence="1">2.7.7.6</ecNumber>
    </recommendedName>
    <alternativeName>
        <fullName evidence="1">PEP</fullName>
    </alternativeName>
    <alternativeName>
        <fullName evidence="1">Plastid-encoded RNA polymerase subunit beta'</fullName>
        <shortName evidence="1">RNA polymerase subunit beta'</shortName>
    </alternativeName>
</protein>
<proteinExistence type="inferred from homology"/>
<reference key="1">
    <citation type="journal article" date="1995" name="Plant Mol. Biol. Rep.">
        <title>Complete nucleotide sequence of the Porphyra purpurea chloroplast genome.</title>
        <authorList>
            <person name="Reith M.E."/>
            <person name="Munholland J."/>
        </authorList>
    </citation>
    <scope>NUCLEOTIDE SEQUENCE [LARGE SCALE GENOMIC DNA]</scope>
    <source>
        <strain>Avonport</strain>
    </source>
</reference>
<reference key="2">
    <citation type="submission" date="1996-04" db="EMBL/GenBank/DDBJ databases">
        <authorList>
            <person name="Palenik B."/>
            <person name="Swift H."/>
        </authorList>
    </citation>
    <scope>NUCLEOTIDE SEQUENCE [GENOMIC DNA] OF 37-245</scope>
</reference>
<accession>P51251</accession>
<geneLocation type="chloroplast"/>
<name>RPOC1_PORPU</name>
<sequence>MTNFEQYFDYVKISLASPEKIRQWGERSLPNGQIVGEITKPETINYRTLKPEMDGLFCEKIFGPVKDWECHCGKYKRFRYKGIVCERCGVEVTESRVRRHRMAYIELASPVTHVWYLKGSTSYIALALDLKVKEVEKIVYFHSYVVTQSSEETNLKYKQLLEGYEWKSLEEEIYQNQDENNQIEVGIGAEAIQKLLKDLDLEYIAETLRLEATNPPKSFKTPSLKFNKKMKRLRLIENFIATGADPSWMVFTVIPVIPPDLRPMVQLDGGRFATADLNEFYRRIINRNNRLSRLKSILAPEIIIRNEKRMLQEAVDSLMDNGRRGRTVVGANNRPLKSLSDIIEGKQGRFRQNLLGKRVDYSGRSVIVVGPHLKLHQCGLPREMALELFQPFVIHRLILQGLVNNIKAAKKMIQKNESSIWNVLNEVIQGHPVLLNRAPTLHRLGIQAFEPILVEGRAIKLHPLVCPAFNADFDGDQMAVHVPLSLEAQAEARLLMLAPHNFLSPATGQPIIMPSQDMVLGCYYLTANNPSQQRGASQYFASLEDVVIAYEKKKVDLHAYIWARFDGVIDSDQVKFPIKIETHHDNSVTKFFDNHIIKEDAEHQRIVQYIRTTPGRIIFNKIIQESLVA</sequence>
<evidence type="ECO:0000255" key="1">
    <source>
        <dbReference type="HAMAP-Rule" id="MF_01323"/>
    </source>
</evidence>
<keyword id="KW-0150">Chloroplast</keyword>
<keyword id="KW-0240">DNA-directed RNA polymerase</keyword>
<keyword id="KW-0460">Magnesium</keyword>
<keyword id="KW-0479">Metal-binding</keyword>
<keyword id="KW-0548">Nucleotidyltransferase</keyword>
<keyword id="KW-0934">Plastid</keyword>
<keyword id="KW-0804">Transcription</keyword>
<keyword id="KW-0808">Transferase</keyword>
<keyword id="KW-0862">Zinc</keyword>
<organism>
    <name type="scientific">Porphyra purpurea</name>
    <name type="common">Red seaweed</name>
    <name type="synonym">Ulva purpurea</name>
    <dbReference type="NCBI Taxonomy" id="2787"/>
    <lineage>
        <taxon>Eukaryota</taxon>
        <taxon>Rhodophyta</taxon>
        <taxon>Bangiophyceae</taxon>
        <taxon>Bangiales</taxon>
        <taxon>Bangiaceae</taxon>
        <taxon>Porphyra</taxon>
    </lineage>
</organism>
<dbReference type="EC" id="2.7.7.6" evidence="1"/>
<dbReference type="EMBL" id="U38804">
    <property type="protein sequence ID" value="AAC08137.1"/>
    <property type="molecule type" value="Genomic_DNA"/>
</dbReference>
<dbReference type="EMBL" id="U52346">
    <property type="protein sequence ID" value="AAA97922.1"/>
    <property type="molecule type" value="Genomic_DNA"/>
</dbReference>
<dbReference type="PIR" id="S73172">
    <property type="entry name" value="S73172"/>
</dbReference>
<dbReference type="RefSeq" id="NP_053861.1">
    <property type="nucleotide sequence ID" value="NC_000925.1"/>
</dbReference>
<dbReference type="SMR" id="P51251"/>
<dbReference type="GeneID" id="809880"/>
<dbReference type="GO" id="GO:0009507">
    <property type="term" value="C:chloroplast"/>
    <property type="evidence" value="ECO:0007669"/>
    <property type="project" value="UniProtKB-SubCell"/>
</dbReference>
<dbReference type="GO" id="GO:0000428">
    <property type="term" value="C:DNA-directed RNA polymerase complex"/>
    <property type="evidence" value="ECO:0007669"/>
    <property type="project" value="UniProtKB-KW"/>
</dbReference>
<dbReference type="GO" id="GO:0005739">
    <property type="term" value="C:mitochondrion"/>
    <property type="evidence" value="ECO:0007669"/>
    <property type="project" value="GOC"/>
</dbReference>
<dbReference type="GO" id="GO:0003677">
    <property type="term" value="F:DNA binding"/>
    <property type="evidence" value="ECO:0007669"/>
    <property type="project" value="UniProtKB-UniRule"/>
</dbReference>
<dbReference type="GO" id="GO:0003899">
    <property type="term" value="F:DNA-directed RNA polymerase activity"/>
    <property type="evidence" value="ECO:0007669"/>
    <property type="project" value="UniProtKB-UniRule"/>
</dbReference>
<dbReference type="GO" id="GO:0000287">
    <property type="term" value="F:magnesium ion binding"/>
    <property type="evidence" value="ECO:0007669"/>
    <property type="project" value="UniProtKB-UniRule"/>
</dbReference>
<dbReference type="GO" id="GO:0008270">
    <property type="term" value="F:zinc ion binding"/>
    <property type="evidence" value="ECO:0007669"/>
    <property type="project" value="UniProtKB-UniRule"/>
</dbReference>
<dbReference type="GO" id="GO:0006351">
    <property type="term" value="P:DNA-templated transcription"/>
    <property type="evidence" value="ECO:0007669"/>
    <property type="project" value="UniProtKB-UniRule"/>
</dbReference>
<dbReference type="Gene3D" id="1.10.40.90">
    <property type="match status" value="1"/>
</dbReference>
<dbReference type="Gene3D" id="2.40.40.20">
    <property type="match status" value="1"/>
</dbReference>
<dbReference type="Gene3D" id="4.10.860.120">
    <property type="entry name" value="RNA polymerase II, clamp domain"/>
    <property type="match status" value="1"/>
</dbReference>
<dbReference type="Gene3D" id="1.10.274.100">
    <property type="entry name" value="RNA polymerase Rpb1, domain 3"/>
    <property type="match status" value="1"/>
</dbReference>
<dbReference type="HAMAP" id="MF_01323">
    <property type="entry name" value="RNApol_bact_RpoC1"/>
    <property type="match status" value="1"/>
</dbReference>
<dbReference type="InterPro" id="IPR012755">
    <property type="entry name" value="DNA-dir_RpoC1_gamma"/>
</dbReference>
<dbReference type="InterPro" id="IPR045867">
    <property type="entry name" value="DNA-dir_RpoC_beta_prime"/>
</dbReference>
<dbReference type="InterPro" id="IPR000722">
    <property type="entry name" value="RNA_pol_asu"/>
</dbReference>
<dbReference type="InterPro" id="IPR006592">
    <property type="entry name" value="RNA_pol_N"/>
</dbReference>
<dbReference type="InterPro" id="IPR007080">
    <property type="entry name" value="RNA_pol_Rpb1_1"/>
</dbReference>
<dbReference type="InterPro" id="IPR007066">
    <property type="entry name" value="RNA_pol_Rpb1_3"/>
</dbReference>
<dbReference type="InterPro" id="IPR042102">
    <property type="entry name" value="RNA_pol_Rpb1_3_sf"/>
</dbReference>
<dbReference type="InterPro" id="IPR044893">
    <property type="entry name" value="RNA_pol_Rpb1_clamp_domain"/>
</dbReference>
<dbReference type="InterPro" id="IPR034678">
    <property type="entry name" value="RNApol_RpoC1"/>
</dbReference>
<dbReference type="NCBIfam" id="NF002729">
    <property type="entry name" value="PRK02625.1"/>
    <property type="match status" value="1"/>
</dbReference>
<dbReference type="NCBIfam" id="TIGR02387">
    <property type="entry name" value="rpoC1_cyan"/>
    <property type="match status" value="1"/>
</dbReference>
<dbReference type="PANTHER" id="PTHR19376">
    <property type="entry name" value="DNA-DIRECTED RNA POLYMERASE"/>
    <property type="match status" value="1"/>
</dbReference>
<dbReference type="PANTHER" id="PTHR19376:SF54">
    <property type="entry name" value="DNA-DIRECTED RNA POLYMERASE SUBUNIT BETA"/>
    <property type="match status" value="1"/>
</dbReference>
<dbReference type="Pfam" id="PF04997">
    <property type="entry name" value="RNA_pol_Rpb1_1"/>
    <property type="match status" value="1"/>
</dbReference>
<dbReference type="Pfam" id="PF00623">
    <property type="entry name" value="RNA_pol_Rpb1_2"/>
    <property type="match status" value="1"/>
</dbReference>
<dbReference type="Pfam" id="PF04983">
    <property type="entry name" value="RNA_pol_Rpb1_3"/>
    <property type="match status" value="1"/>
</dbReference>
<dbReference type="SMART" id="SM00663">
    <property type="entry name" value="RPOLA_N"/>
    <property type="match status" value="1"/>
</dbReference>
<dbReference type="SUPFAM" id="SSF64484">
    <property type="entry name" value="beta and beta-prime subunits of DNA dependent RNA-polymerase"/>
    <property type="match status" value="1"/>
</dbReference>
<gene>
    <name evidence="1" type="primary">rpoC1</name>
</gene>